<organism>
    <name type="scientific">Escherichia coli O157:H7</name>
    <dbReference type="NCBI Taxonomy" id="83334"/>
    <lineage>
        <taxon>Bacteria</taxon>
        <taxon>Pseudomonadati</taxon>
        <taxon>Pseudomonadota</taxon>
        <taxon>Gammaproteobacteria</taxon>
        <taxon>Enterobacterales</taxon>
        <taxon>Enterobacteriaceae</taxon>
        <taxon>Escherichia</taxon>
    </lineage>
</organism>
<protein>
    <recommendedName>
        <fullName evidence="1">RNA polymerase sigma factor RpoH</fullName>
    </recommendedName>
    <alternativeName>
        <fullName evidence="1">RNA polymerase sigma-32 factor</fullName>
    </alternativeName>
</protein>
<gene>
    <name evidence="1" type="primary">rpoH</name>
    <name type="ordered locus">Z4835</name>
    <name type="ordered locus">ECs4310</name>
</gene>
<dbReference type="EMBL" id="AE005174">
    <property type="protein sequence ID" value="AAG58570.1"/>
    <property type="molecule type" value="Genomic_DNA"/>
</dbReference>
<dbReference type="EMBL" id="BA000007">
    <property type="protein sequence ID" value="BAB37733.1"/>
    <property type="molecule type" value="Genomic_DNA"/>
</dbReference>
<dbReference type="PIR" id="F86013">
    <property type="entry name" value="F86013"/>
</dbReference>
<dbReference type="PIR" id="F91167">
    <property type="entry name" value="F91167"/>
</dbReference>
<dbReference type="RefSeq" id="NP_312337.1">
    <property type="nucleotide sequence ID" value="NC_002695.1"/>
</dbReference>
<dbReference type="RefSeq" id="WP_000130217.1">
    <property type="nucleotide sequence ID" value="NZ_VOAI01000004.1"/>
</dbReference>
<dbReference type="SMR" id="P0AGB5"/>
<dbReference type="STRING" id="155864.Z4835"/>
<dbReference type="GeneID" id="915834"/>
<dbReference type="GeneID" id="93778530"/>
<dbReference type="KEGG" id="ece:Z4835"/>
<dbReference type="KEGG" id="ecs:ECs_4310"/>
<dbReference type="PATRIC" id="fig|386585.9.peg.4503"/>
<dbReference type="eggNOG" id="COG0568">
    <property type="taxonomic scope" value="Bacteria"/>
</dbReference>
<dbReference type="HOGENOM" id="CLU_014793_3_5_6"/>
<dbReference type="OMA" id="MDAPFVQ"/>
<dbReference type="Proteomes" id="UP000000558">
    <property type="component" value="Chromosome"/>
</dbReference>
<dbReference type="Proteomes" id="UP000002519">
    <property type="component" value="Chromosome"/>
</dbReference>
<dbReference type="GO" id="GO:0005737">
    <property type="term" value="C:cytoplasm"/>
    <property type="evidence" value="ECO:0007669"/>
    <property type="project" value="UniProtKB-SubCell"/>
</dbReference>
<dbReference type="GO" id="GO:0003677">
    <property type="term" value="F:DNA binding"/>
    <property type="evidence" value="ECO:0007669"/>
    <property type="project" value="UniProtKB-UniRule"/>
</dbReference>
<dbReference type="GO" id="GO:0016987">
    <property type="term" value="F:sigma factor activity"/>
    <property type="evidence" value="ECO:0007669"/>
    <property type="project" value="UniProtKB-UniRule"/>
</dbReference>
<dbReference type="GO" id="GO:0006352">
    <property type="term" value="P:DNA-templated transcription initiation"/>
    <property type="evidence" value="ECO:0007669"/>
    <property type="project" value="UniProtKB-UniRule"/>
</dbReference>
<dbReference type="GO" id="GO:0009408">
    <property type="term" value="P:response to heat"/>
    <property type="evidence" value="ECO:0007669"/>
    <property type="project" value="UniProtKB-UniRule"/>
</dbReference>
<dbReference type="CDD" id="cd06171">
    <property type="entry name" value="Sigma70_r4"/>
    <property type="match status" value="1"/>
</dbReference>
<dbReference type="FunFam" id="1.10.10.10:FF:000285">
    <property type="entry name" value="RNA polymerase sigma factor RpoH"/>
    <property type="match status" value="1"/>
</dbReference>
<dbReference type="FunFam" id="1.20.120.1810:FF:000001">
    <property type="entry name" value="RNA polymerase sigma factor RpoH"/>
    <property type="match status" value="1"/>
</dbReference>
<dbReference type="FunFam" id="1.20.140.160:FF:000002">
    <property type="entry name" value="RNA polymerase sigma factor RpoH"/>
    <property type="match status" value="1"/>
</dbReference>
<dbReference type="Gene3D" id="1.20.120.1810">
    <property type="match status" value="1"/>
</dbReference>
<dbReference type="Gene3D" id="1.20.140.160">
    <property type="match status" value="1"/>
</dbReference>
<dbReference type="HAMAP" id="MF_00961">
    <property type="entry name" value="Sigma70_RpoH"/>
    <property type="match status" value="1"/>
</dbReference>
<dbReference type="InterPro" id="IPR014284">
    <property type="entry name" value="RNA_pol_sigma-70_dom"/>
</dbReference>
<dbReference type="InterPro" id="IPR000943">
    <property type="entry name" value="RNA_pol_sigma70"/>
</dbReference>
<dbReference type="InterPro" id="IPR007627">
    <property type="entry name" value="RNA_pol_sigma70_r2"/>
</dbReference>
<dbReference type="InterPro" id="IPR007630">
    <property type="entry name" value="RNA_pol_sigma70_r4"/>
</dbReference>
<dbReference type="InterPro" id="IPR013325">
    <property type="entry name" value="RNA_pol_sigma_r2"/>
</dbReference>
<dbReference type="InterPro" id="IPR013324">
    <property type="entry name" value="RNA_pol_sigma_r3/r4-like"/>
</dbReference>
<dbReference type="InterPro" id="IPR012759">
    <property type="entry name" value="RNA_pol_sigma_RpoH_proteobac"/>
</dbReference>
<dbReference type="InterPro" id="IPR050813">
    <property type="entry name" value="Sigma-70_Factor"/>
</dbReference>
<dbReference type="NCBIfam" id="NF005143">
    <property type="entry name" value="PRK06596.1"/>
    <property type="match status" value="1"/>
</dbReference>
<dbReference type="NCBIfam" id="TIGR02392">
    <property type="entry name" value="rpoH_proteo"/>
    <property type="match status" value="1"/>
</dbReference>
<dbReference type="NCBIfam" id="TIGR02937">
    <property type="entry name" value="sigma70-ECF"/>
    <property type="match status" value="1"/>
</dbReference>
<dbReference type="PANTHER" id="PTHR30376:SF3">
    <property type="entry name" value="RNA POLYMERASE SIGMA FACTOR RPOH"/>
    <property type="match status" value="1"/>
</dbReference>
<dbReference type="PANTHER" id="PTHR30376">
    <property type="entry name" value="SIGMA FACTOR RPOH HEAT SHOCK RELATED"/>
    <property type="match status" value="1"/>
</dbReference>
<dbReference type="Pfam" id="PF04542">
    <property type="entry name" value="Sigma70_r2"/>
    <property type="match status" value="1"/>
</dbReference>
<dbReference type="Pfam" id="PF04545">
    <property type="entry name" value="Sigma70_r4"/>
    <property type="match status" value="1"/>
</dbReference>
<dbReference type="PIRSF" id="PIRSF000770">
    <property type="entry name" value="RNA_pol_sigma-SigE/K"/>
    <property type="match status" value="1"/>
</dbReference>
<dbReference type="PRINTS" id="PR00046">
    <property type="entry name" value="SIGMA70FCT"/>
</dbReference>
<dbReference type="SUPFAM" id="SSF88946">
    <property type="entry name" value="Sigma2 domain of RNA polymerase sigma factors"/>
    <property type="match status" value="1"/>
</dbReference>
<dbReference type="SUPFAM" id="SSF88659">
    <property type="entry name" value="Sigma3 and sigma4 domains of RNA polymerase sigma factors"/>
    <property type="match status" value="1"/>
</dbReference>
<dbReference type="PROSITE" id="PS00715">
    <property type="entry name" value="SIGMA70_1"/>
    <property type="match status" value="1"/>
</dbReference>
<dbReference type="PROSITE" id="PS00716">
    <property type="entry name" value="SIGMA70_2"/>
    <property type="match status" value="1"/>
</dbReference>
<accession>P0AGB5</accession>
<accession>P00580</accession>
<feature type="chain" id="PRO_0000093958" description="RNA polymerase sigma factor RpoH">
    <location>
        <begin position="1"/>
        <end position="284"/>
    </location>
</feature>
<feature type="DNA-binding region" description="H-T-H motif" evidence="1">
    <location>
        <begin position="253"/>
        <end position="272"/>
    </location>
</feature>
<feature type="region of interest" description="Sigma-70 factor domain-2" evidence="1">
    <location>
        <begin position="53"/>
        <end position="122"/>
    </location>
</feature>
<feature type="region of interest" description="Sigma-70 factor domain-4" evidence="1">
    <location>
        <begin position="228"/>
        <end position="280"/>
    </location>
</feature>
<feature type="short sequence motif" description="Interaction with polymerase core subunit RpoC">
    <location>
        <begin position="77"/>
        <end position="80"/>
    </location>
</feature>
<proteinExistence type="inferred from homology"/>
<comment type="function">
    <text evidence="1">Sigma factors are initiation factors that promote the attachment of RNA polymerase to specific initiation sites and are then released. This sigma factor is involved in regulation of expression of heat shock genes.</text>
</comment>
<comment type="subunit">
    <text evidence="1">Interacts with the RNA polymerase core enzyme.</text>
</comment>
<comment type="subcellular location">
    <subcellularLocation>
        <location evidence="1">Cytoplasm</location>
    </subcellularLocation>
</comment>
<comment type="similarity">
    <text evidence="1">Belongs to the sigma-70 factor family. RpoH subfamily.</text>
</comment>
<name>RPOH_ECO57</name>
<keyword id="KW-0963">Cytoplasm</keyword>
<keyword id="KW-0238">DNA-binding</keyword>
<keyword id="KW-1185">Reference proteome</keyword>
<keyword id="KW-0731">Sigma factor</keyword>
<keyword id="KW-0346">Stress response</keyword>
<keyword id="KW-0804">Transcription</keyword>
<keyword id="KW-0805">Transcription regulation</keyword>
<reference key="1">
    <citation type="journal article" date="2001" name="Nature">
        <title>Genome sequence of enterohaemorrhagic Escherichia coli O157:H7.</title>
        <authorList>
            <person name="Perna N.T."/>
            <person name="Plunkett G. III"/>
            <person name="Burland V."/>
            <person name="Mau B."/>
            <person name="Glasner J.D."/>
            <person name="Rose D.J."/>
            <person name="Mayhew G.F."/>
            <person name="Evans P.S."/>
            <person name="Gregor J."/>
            <person name="Kirkpatrick H.A."/>
            <person name="Posfai G."/>
            <person name="Hackett J."/>
            <person name="Klink S."/>
            <person name="Boutin A."/>
            <person name="Shao Y."/>
            <person name="Miller L."/>
            <person name="Grotbeck E.J."/>
            <person name="Davis N.W."/>
            <person name="Lim A."/>
            <person name="Dimalanta E.T."/>
            <person name="Potamousis K."/>
            <person name="Apodaca J."/>
            <person name="Anantharaman T.S."/>
            <person name="Lin J."/>
            <person name="Yen G."/>
            <person name="Schwartz D.C."/>
            <person name="Welch R.A."/>
            <person name="Blattner F.R."/>
        </authorList>
    </citation>
    <scope>NUCLEOTIDE SEQUENCE [LARGE SCALE GENOMIC DNA]</scope>
    <source>
        <strain>O157:H7 / EDL933 / ATCC 700927 / EHEC</strain>
    </source>
</reference>
<reference key="2">
    <citation type="journal article" date="2001" name="DNA Res.">
        <title>Complete genome sequence of enterohemorrhagic Escherichia coli O157:H7 and genomic comparison with a laboratory strain K-12.</title>
        <authorList>
            <person name="Hayashi T."/>
            <person name="Makino K."/>
            <person name="Ohnishi M."/>
            <person name="Kurokawa K."/>
            <person name="Ishii K."/>
            <person name="Yokoyama K."/>
            <person name="Han C.-G."/>
            <person name="Ohtsubo E."/>
            <person name="Nakayama K."/>
            <person name="Murata T."/>
            <person name="Tanaka M."/>
            <person name="Tobe T."/>
            <person name="Iida T."/>
            <person name="Takami H."/>
            <person name="Honda T."/>
            <person name="Sasakawa C."/>
            <person name="Ogasawara N."/>
            <person name="Yasunaga T."/>
            <person name="Kuhara S."/>
            <person name="Shiba T."/>
            <person name="Hattori M."/>
            <person name="Shinagawa H."/>
        </authorList>
    </citation>
    <scope>NUCLEOTIDE SEQUENCE [LARGE SCALE GENOMIC DNA]</scope>
    <source>
        <strain>O157:H7 / Sakai / RIMD 0509952 / EHEC</strain>
    </source>
</reference>
<evidence type="ECO:0000255" key="1">
    <source>
        <dbReference type="HAMAP-Rule" id="MF_00961"/>
    </source>
</evidence>
<sequence length="284" mass="32469">MTDKMQSLALAPVGNLDSYIRAANAWPMLSADEERALAEKLHYHGDLEAAKTLILSHLRFVVHIARNYAGYGLPQADLIQEGNIGLMKAVRRFNPEVGVRLVSFAVHWIKAEIHEYVLRNWRIVKVATTKAQRKLFFNLRKTKQRLGWFNQDEVEMVARELGVTSKDVREMESRMAAQDMTFDLSSDDDSDSQPMAPVLYLQDKSSNFADGIEDDNWEEQAANRLTDAMQGLDERSQDIIRARWLDEDNKSTLQELADRYGVSAERVRQLEKNAMKKLRAAIEA</sequence>